<evidence type="ECO:0000269" key="1">
    <source>
    </source>
</evidence>
<evidence type="ECO:0000269" key="2">
    <source>
    </source>
</evidence>
<evidence type="ECO:0000269" key="3">
    <source>
    </source>
</evidence>
<evidence type="ECO:0000269" key="4">
    <source>
    </source>
</evidence>
<evidence type="ECO:0000303" key="5">
    <source>
    </source>
</evidence>
<evidence type="ECO:0000303" key="6">
    <source>
    </source>
</evidence>
<evidence type="ECO:0000303" key="7">
    <source>
    </source>
</evidence>
<evidence type="ECO:0000303" key="8">
    <source>
    </source>
</evidence>
<evidence type="ECO:0000305" key="9"/>
<evidence type="ECO:0000305" key="10">
    <source>
    </source>
</evidence>
<evidence type="ECO:0000312" key="11">
    <source>
        <dbReference type="EMBL" id="BAN13301.1"/>
    </source>
</evidence>
<evidence type="ECO:0007744" key="12">
    <source>
        <dbReference type="PDB" id="4UWM"/>
    </source>
</evidence>
<evidence type="ECO:0007744" key="13">
    <source>
        <dbReference type="PDB" id="5AEC"/>
    </source>
</evidence>
<evidence type="ECO:0007829" key="14">
    <source>
        <dbReference type="PDB" id="4UWM"/>
    </source>
</evidence>
<evidence type="ECO:0007829" key="15">
    <source>
        <dbReference type="PDB" id="5AEC"/>
    </source>
</evidence>
<sequence>MAMETGLIFHPYMRPGRSARQTFDWGIKSAVQADSVGIDSMMISEHASQIWENIPNPELLIAAAALQTKNIKFAPMAHLLPHQHPAKLATMIGWLSQILEGRYFLGIGAGAYPQASYMHGIRNAGQSNTATGGEETKNLNDMVRESLFIMEKIWKREPFFHEGKYWDAGYPEELEGEEGDEQHKLADFSPWGGKAPEIAVTGFSYNSPSMRLAGERNFKPVSIFSGLDALKRHWEVYSEAAIEAGHTPDRSRHAVSHTVFCADTDKEAKRLVMEGPIGYCFERYLIPIWRRFGMMDGYAKDAGIDPVDADLEFLVDNVFLVGSPDTVTEKINALFEATGGWGTLQVEAHDYYDDPAPWFQSLELISKEVAPKILLPKR</sequence>
<comment type="function">
    <text evidence="1 2 4 10">Involved in the degradation and assimilation of (-)-camphor, which allows P.putida strain NCIMB 10007 to grow on this enantiomer of camphor as the sole carbon source (PubMed:8515237). Catalyzes the FMNH(2)-dependent lactonization of 3,6-diketocamphane via a Baeyer-Villiger oxidation to produce the unstable lactone 5-oxo-1,2-campholide with (S,S) configuration, that presumably undergoes spontaneous hydrolysis to form 2-oxo-Delta(3)-4,5,5-trimethylcyclopentenylacetate (PubMed:23524667). Is also able to convert (-)-camphor to the corresponding lactone in vitro (PubMed:22286514, PubMed:23524667, PubMed:8515237). Shows no conversion of (+)-camphor, (+)-fenchone, (-)-fenchone, and (+)-nopinone. Acts on other bicyclic ketones but very poorly on a few 2- and 4-substituted monocyclic ketones (PubMed:23524667).</text>
</comment>
<comment type="catalytic activity">
    <reaction evidence="2">
        <text>(1S,4S)-bornane-2,5-dione + FMNH2 + O2 = (1S,4S)-5-oxo-1,2-campholide + FMN + H2O + H(+)</text>
        <dbReference type="Rhea" id="RHEA:56596"/>
        <dbReference type="ChEBI" id="CHEBI:15377"/>
        <dbReference type="ChEBI" id="CHEBI:15378"/>
        <dbReference type="ChEBI" id="CHEBI:15379"/>
        <dbReference type="ChEBI" id="CHEBI:36776"/>
        <dbReference type="ChEBI" id="CHEBI:57618"/>
        <dbReference type="ChEBI" id="CHEBI:58210"/>
        <dbReference type="ChEBI" id="CHEBI:66896"/>
        <dbReference type="EC" id="1.14.14.155"/>
    </reaction>
</comment>
<comment type="biophysicochemical properties">
    <phDependence>
        <text evidence="2">Optimum pH is 7.0.</text>
    </phDependence>
</comment>
<comment type="subunit">
    <text evidence="2 3 4">Homodimer (PubMed:23524667, PubMed:26527149, PubMed:8515237). Likely forms a loose transient complex with a P.putida flavin reductase that provides the required FMNH(2) to the enzyme (PubMed:23524667, PubMed:8515237).</text>
</comment>
<comment type="induction">
    <text evidence="4">By (-)-camphor and, to a lesser extent, by (+)-camphor.</text>
</comment>
<comment type="similarity">
    <text evidence="9">Belongs to the bacterial luciferase oxidoreductase family.</text>
</comment>
<feature type="chain" id="PRO_0000422222" description="3,6-diketocamphane 1,6-monooxygenase">
    <location>
        <begin position="1"/>
        <end position="378"/>
    </location>
</feature>
<feature type="binding site" evidence="3 12">
    <location>
        <position position="10"/>
    </location>
    <ligand>
        <name>FMN</name>
        <dbReference type="ChEBI" id="CHEBI:58210"/>
    </ligand>
</feature>
<feature type="binding site" evidence="3 12">
    <location>
        <position position="44"/>
    </location>
    <ligand>
        <name>FMN</name>
        <dbReference type="ChEBI" id="CHEBI:58210"/>
    </ligand>
</feature>
<feature type="binding site" evidence="3 12">
    <location>
        <position position="76"/>
    </location>
    <ligand>
        <name>FMN</name>
        <dbReference type="ChEBI" id="CHEBI:58210"/>
    </ligand>
</feature>
<feature type="binding site" evidence="3 12">
    <location>
        <begin position="201"/>
        <end position="209"/>
    </location>
    <ligand>
        <name>FMN</name>
        <dbReference type="ChEBI" id="CHEBI:58210"/>
    </ligand>
</feature>
<feature type="sequence conflict" description="In Ref. 1; AEZ35247." evidence="9" ref="1">
    <original>G</original>
    <variation>S</variation>
    <location>
        <position position="278"/>
    </location>
</feature>
<feature type="strand" evidence="14">
    <location>
        <begin position="4"/>
        <end position="9"/>
    </location>
</feature>
<feature type="helix" evidence="14">
    <location>
        <begin position="19"/>
        <end position="35"/>
    </location>
</feature>
<feature type="strand" evidence="14">
    <location>
        <begin position="40"/>
        <end position="43"/>
    </location>
</feature>
<feature type="strand" evidence="14">
    <location>
        <begin position="50"/>
        <end position="52"/>
    </location>
</feature>
<feature type="helix" evidence="14">
    <location>
        <begin position="57"/>
        <end position="65"/>
    </location>
</feature>
<feature type="strand" evidence="14">
    <location>
        <begin position="72"/>
        <end position="76"/>
    </location>
</feature>
<feature type="helix" evidence="14">
    <location>
        <begin position="80"/>
        <end position="82"/>
    </location>
</feature>
<feature type="helix" evidence="14">
    <location>
        <begin position="85"/>
        <end position="98"/>
    </location>
</feature>
<feature type="turn" evidence="14">
    <location>
        <begin position="99"/>
        <end position="101"/>
    </location>
</feature>
<feature type="strand" evidence="14">
    <location>
        <begin position="105"/>
        <end position="108"/>
    </location>
</feature>
<feature type="helix" evidence="14">
    <location>
        <begin position="113"/>
        <end position="118"/>
    </location>
</feature>
<feature type="turn" evidence="15">
    <location>
        <begin position="122"/>
        <end position="125"/>
    </location>
</feature>
<feature type="helix" evidence="14">
    <location>
        <begin position="139"/>
        <end position="155"/>
    </location>
</feature>
<feature type="strand" evidence="14">
    <location>
        <begin position="159"/>
        <end position="162"/>
    </location>
</feature>
<feature type="strand" evidence="14">
    <location>
        <begin position="167"/>
        <end position="170"/>
    </location>
</feature>
<feature type="helix" evidence="14">
    <location>
        <begin position="181"/>
        <end position="183"/>
    </location>
</feature>
<feature type="helix" evidence="14">
    <location>
        <begin position="191"/>
        <end position="193"/>
    </location>
</feature>
<feature type="strand" evidence="14">
    <location>
        <begin position="198"/>
        <end position="202"/>
    </location>
</feature>
<feature type="strand" evidence="14">
    <location>
        <begin position="204"/>
        <end position="206"/>
    </location>
</feature>
<feature type="helix" evidence="14">
    <location>
        <begin position="208"/>
        <end position="216"/>
    </location>
</feature>
<feature type="strand" evidence="14">
    <location>
        <begin position="219"/>
        <end position="223"/>
    </location>
</feature>
<feature type="helix" evidence="14">
    <location>
        <begin position="227"/>
        <end position="244"/>
    </location>
</feature>
<feature type="helix" evidence="14">
    <location>
        <begin position="250"/>
        <end position="252"/>
    </location>
</feature>
<feature type="strand" evidence="14">
    <location>
        <begin position="254"/>
        <end position="257"/>
    </location>
</feature>
<feature type="strand" evidence="14">
    <location>
        <begin position="259"/>
        <end position="261"/>
    </location>
</feature>
<feature type="helix" evidence="14">
    <location>
        <begin position="265"/>
        <end position="274"/>
    </location>
</feature>
<feature type="helix" evidence="14">
    <location>
        <begin position="276"/>
        <end position="283"/>
    </location>
</feature>
<feature type="helix" evidence="14">
    <location>
        <begin position="285"/>
        <end position="291"/>
    </location>
</feature>
<feature type="turn" evidence="14">
    <location>
        <begin position="292"/>
        <end position="295"/>
    </location>
</feature>
<feature type="helix" evidence="14">
    <location>
        <begin position="296"/>
        <end position="302"/>
    </location>
</feature>
<feature type="helix" evidence="14">
    <location>
        <begin position="306"/>
        <end position="308"/>
    </location>
</feature>
<feature type="helix" evidence="14">
    <location>
        <begin position="311"/>
        <end position="317"/>
    </location>
</feature>
<feature type="strand" evidence="14">
    <location>
        <begin position="319"/>
        <end position="323"/>
    </location>
</feature>
<feature type="helix" evidence="14">
    <location>
        <begin position="324"/>
        <end position="338"/>
    </location>
</feature>
<feature type="strand" evidence="14">
    <location>
        <begin position="342"/>
        <end position="347"/>
    </location>
</feature>
<feature type="helix" evidence="14">
    <location>
        <begin position="356"/>
        <end position="367"/>
    </location>
</feature>
<feature type="helix" evidence="14">
    <location>
        <begin position="370"/>
        <end position="372"/>
    </location>
</feature>
<keyword id="KW-0002">3D-structure</keyword>
<keyword id="KW-0285">Flavoprotein</keyword>
<keyword id="KW-0288">FMN</keyword>
<keyword id="KW-0503">Monooxygenase</keyword>
<keyword id="KW-0560">Oxidoreductase</keyword>
<keyword id="KW-0614">Plasmid</keyword>
<organism>
    <name type="scientific">Pseudomonas putida</name>
    <name type="common">Arthrobacter siderocapsulatus</name>
    <dbReference type="NCBI Taxonomy" id="303"/>
    <lineage>
        <taxon>Bacteria</taxon>
        <taxon>Pseudomonadati</taxon>
        <taxon>Pseudomonadota</taxon>
        <taxon>Gammaproteobacteria</taxon>
        <taxon>Pseudomonadales</taxon>
        <taxon>Pseudomonadaceae</taxon>
        <taxon>Pseudomonas</taxon>
    </lineage>
</organism>
<geneLocation type="plasmid">
    <name>CAM</name>
</geneLocation>
<name>36DKM_PSEPU</name>
<reference key="1">
    <citation type="journal article" date="2012" name="Appl. Microbiol. Biotechnol.">
        <title>Completing the series of BVMOs involved in camphor metabolism of Pseudomonas putida NCIMB 10007 by identification of the two missing genes, their functional expression in E. coli, and biochemical characterization.</title>
        <authorList>
            <person name="Kadow M."/>
            <person name="Loschinski K."/>
            <person name="Sass S."/>
            <person name="Schmidt M."/>
            <person name="Bornscheuer U.T."/>
        </authorList>
    </citation>
    <scope>NUCLEOTIDE SEQUENCE [GENOMIC DNA]</scope>
    <scope>FUNCTION</scope>
    <scope>BVMO ACTIVITY</scope>
    <scope>SUBSTRATE SPECIFICITY</scope>
    <source>
        <strain>ATCC 17453 / DSM 50198 / JCM 6157 / NCIMB 10007 / NRRL B-4067 / Stanier 77 / Biotype A</strain>
        <plasmid>CAM</plasmid>
    </source>
</reference>
<reference key="2">
    <citation type="journal article" date="2013" name="Appl. Environ. Microbiol.">
        <title>Camphor pathway redux: functional recombinant expression of 2,5- and 3,6-diketocamphane monooxygenases of Pseudomonas putida ATCC 17453 with their cognate flavin reductase catalyzing Baeyer-Villiger reactions.</title>
        <authorList>
            <person name="Iwaki H."/>
            <person name="Grosse S."/>
            <person name="Bergeron H."/>
            <person name="Leisch H."/>
            <person name="Morley K."/>
            <person name="Hasegawa Y."/>
            <person name="Lau P.C.K."/>
        </authorList>
    </citation>
    <scope>NUCLEOTIDE SEQUENCE [GENOMIC DNA]</scope>
    <scope>FUNCTION</scope>
    <scope>CATALYTIC ACTIVITY</scope>
    <scope>SUBSTRATE SPECIFICITY</scope>
    <scope>BIOPHYSICOCHEMICAL PROPERTIES</scope>
    <scope>SUBUNIT</scope>
    <source>
        <strain>ATCC 17453 / DSM 50198 / JCM 6157 / NCIMB 10007 / NRRL B-4067 / Stanier 77 / Biotype A</strain>
        <plasmid>CAM</plasmid>
    </source>
</reference>
<reference key="3">
    <citation type="journal article" date="1993" name="J. Gen. Microbiol.">
        <title>Diketocamphane enantiomer-specific 'Baeyer-Villiger' monooxygenases from camphor-grown Pseudomonas putida ATCC 17453.</title>
        <authorList>
            <person name="Jones K.H."/>
            <person name="Smith R.T."/>
            <person name="Trudgill P.W."/>
        </authorList>
    </citation>
    <scope>FUNCTION</scope>
    <scope>BVMO ACTIVITY</scope>
    <scope>SUBUNIT</scope>
    <scope>INDUCTION</scope>
    <source>
        <strain>ATCC 17453 / DSM 50198 / JCM 6157 / NCIMB 10007 / NRRL B-4067 / Stanier 77 / Biotype A</strain>
        <plasmid>CAM</plasmid>
    </source>
</reference>
<reference evidence="12 13" key="4">
    <citation type="journal article" date="2015" name="Acta Crystallogr. D">
        <title>The oxygenating constituent of 3,6-diketocamphane monooxygenase from the CAM plasmid of Pseudomonas putida: the first crystal structure of a type II Baeyer-Villiger monooxygenase.</title>
        <authorList>
            <person name="Isupov M.N."/>
            <person name="Schroder E."/>
            <person name="Gibson R.P."/>
            <person name="Beecher J."/>
            <person name="Donadio G."/>
            <person name="Saneei V."/>
            <person name="Dcunha S.A."/>
            <person name="McGhie E.J."/>
            <person name="Sayer C."/>
            <person name="Davenport C.F."/>
            <person name="Lau P.C."/>
            <person name="Hasegawa Y."/>
            <person name="Iwaki H."/>
            <person name="Kadow M."/>
            <person name="Balke K."/>
            <person name="Bornscheuer U.T."/>
            <person name="Bourenkov G."/>
            <person name="Littlechild J.A."/>
        </authorList>
    </citation>
    <scope>X-RAY CRYSTALLOGRAPHY (1.90 ANGSTROMS) OF THE NATIVE ENZYME AND IN COMPLEX WITH FMN</scope>
    <scope>SUBUNIT</scope>
</reference>
<proteinExistence type="evidence at protein level"/>
<accession>D7UER1</accession>
<accession>H6W8H7</accession>
<accession>M5B4M0</accession>
<gene>
    <name evidence="6 11" type="primary">camE36</name>
</gene>
<dbReference type="EC" id="1.14.14.155" evidence="2"/>
<dbReference type="EMBL" id="JQ034404">
    <property type="protein sequence ID" value="AEZ35247.1"/>
    <property type="molecule type" value="Genomic_DNA"/>
</dbReference>
<dbReference type="EMBL" id="AB771747">
    <property type="protein sequence ID" value="BAN13301.1"/>
    <property type="molecule type" value="Genomic_DNA"/>
</dbReference>
<dbReference type="PDB" id="4UWM">
    <property type="method" value="X-ray"/>
    <property type="resolution" value="1.90 A"/>
    <property type="chains" value="A/B=1-378"/>
</dbReference>
<dbReference type="PDB" id="5AEC">
    <property type="method" value="X-ray"/>
    <property type="resolution" value="2.00 A"/>
    <property type="chains" value="A/B=1-378"/>
</dbReference>
<dbReference type="PDBsum" id="4UWM"/>
<dbReference type="PDBsum" id="5AEC"/>
<dbReference type="SMR" id="D7UER1"/>
<dbReference type="KEGG" id="ag:BAN13301"/>
<dbReference type="BRENDA" id="1.14.14.155">
    <property type="organism ID" value="5092"/>
</dbReference>
<dbReference type="EvolutionaryTrace" id="D7UER1"/>
<dbReference type="GO" id="GO:0005829">
    <property type="term" value="C:cytosol"/>
    <property type="evidence" value="ECO:0007669"/>
    <property type="project" value="TreeGrafter"/>
</dbReference>
<dbReference type="GO" id="GO:0004497">
    <property type="term" value="F:monooxygenase activity"/>
    <property type="evidence" value="ECO:0007669"/>
    <property type="project" value="UniProtKB-KW"/>
</dbReference>
<dbReference type="GO" id="GO:0016705">
    <property type="term" value="F:oxidoreductase activity, acting on paired donors, with incorporation or reduction of molecular oxygen"/>
    <property type="evidence" value="ECO:0007669"/>
    <property type="project" value="InterPro"/>
</dbReference>
<dbReference type="Gene3D" id="3.20.20.30">
    <property type="entry name" value="Luciferase-like domain"/>
    <property type="match status" value="1"/>
</dbReference>
<dbReference type="InterPro" id="IPR050766">
    <property type="entry name" value="Bact_Lucif_Oxidored"/>
</dbReference>
<dbReference type="InterPro" id="IPR011251">
    <property type="entry name" value="Luciferase-like_dom"/>
</dbReference>
<dbReference type="InterPro" id="IPR036661">
    <property type="entry name" value="Luciferase-like_sf"/>
</dbReference>
<dbReference type="PANTHER" id="PTHR30137:SF16">
    <property type="entry name" value="BLL0895 PROTEIN"/>
    <property type="match status" value="1"/>
</dbReference>
<dbReference type="PANTHER" id="PTHR30137">
    <property type="entry name" value="LUCIFERASE-LIKE MONOOXYGENASE"/>
    <property type="match status" value="1"/>
</dbReference>
<dbReference type="Pfam" id="PF00296">
    <property type="entry name" value="Bac_luciferase"/>
    <property type="match status" value="1"/>
</dbReference>
<dbReference type="SUPFAM" id="SSF51679">
    <property type="entry name" value="Bacterial luciferase-like"/>
    <property type="match status" value="1"/>
</dbReference>
<protein>
    <recommendedName>
        <fullName evidence="5 8">3,6-diketocamphane 1,6-monooxygenase</fullName>
        <shortName evidence="5 6">3,6-DKCMO</shortName>
        <shortName evidence="7">3,6-DKMO</shortName>
        <shortName evidence="6">3,6-diketocamphane monooxygenase</shortName>
        <ecNumber evidence="2">1.14.14.155</ecNumber>
    </recommendedName>
    <alternativeName>
        <fullName evidence="5">3,6-diketocamphane monooxygenase oxygenating constituent</fullName>
    </alternativeName>
    <alternativeName>
        <fullName evidence="7">3,6-diketocamphane monooxygenase oxygenating subunit</fullName>
    </alternativeName>
    <alternativeName>
        <fullName>Camphor 1,6-monooxygenase</fullName>
    </alternativeName>
    <alternativeName>
        <fullName evidence="7">Type II Baeyer-Villiger monooxygenase</fullName>
        <shortName evidence="7">Type II BVMO</shortName>
    </alternativeName>
</protein>